<sequence length="352" mass="38020">MSGNTFGKIFTVTTCGESHGDSLAAIIDGCPSNIPLCEADIQLELDRRKPGQSKFTTQRKEPDEVKIISGVFEGKTTGTPIGLIIKNQDQKSKDYSEIKDKFRPGHADYTYFKKYGIRDYRGGGRSSARETAMRVAAGAIAKKILKHYGIEIYGFCSQIGSLKIDFIDKDFINQNPFFIANKNAVPACEDLIHSIRKQGDSIGAEVTVVATGLEAGLGRPVFDRLDASIAYAMMSINAVKAVSIGDGFDCVAQKGSQHRDEITQQQGFLSNHAGGILGGISTGQDIIAKLAFKPTSSILQPGKSIDVQGNDTTVITKGRHDPCVGIRGVPIAEAMLALVLVDELLITRSYRD</sequence>
<accession>Q14HW8</accession>
<proteinExistence type="inferred from homology"/>
<dbReference type="EC" id="4.2.3.5" evidence="1"/>
<dbReference type="EMBL" id="AM286280">
    <property type="protein sequence ID" value="CAL08892.1"/>
    <property type="molecule type" value="Genomic_DNA"/>
</dbReference>
<dbReference type="RefSeq" id="WP_003020861.1">
    <property type="nucleotide sequence ID" value="NC_008245.1"/>
</dbReference>
<dbReference type="SMR" id="Q14HW8"/>
<dbReference type="KEGG" id="ftf:FTF0876c"/>
<dbReference type="HOGENOM" id="CLU_034547_0_2_6"/>
<dbReference type="UniPathway" id="UPA00053">
    <property type="reaction ID" value="UER00090"/>
</dbReference>
<dbReference type="GO" id="GO:0005829">
    <property type="term" value="C:cytosol"/>
    <property type="evidence" value="ECO:0007669"/>
    <property type="project" value="TreeGrafter"/>
</dbReference>
<dbReference type="GO" id="GO:0004107">
    <property type="term" value="F:chorismate synthase activity"/>
    <property type="evidence" value="ECO:0007669"/>
    <property type="project" value="UniProtKB-UniRule"/>
</dbReference>
<dbReference type="GO" id="GO:0010181">
    <property type="term" value="F:FMN binding"/>
    <property type="evidence" value="ECO:0007669"/>
    <property type="project" value="TreeGrafter"/>
</dbReference>
<dbReference type="GO" id="GO:0008652">
    <property type="term" value="P:amino acid biosynthetic process"/>
    <property type="evidence" value="ECO:0007669"/>
    <property type="project" value="UniProtKB-KW"/>
</dbReference>
<dbReference type="GO" id="GO:0009073">
    <property type="term" value="P:aromatic amino acid family biosynthetic process"/>
    <property type="evidence" value="ECO:0007669"/>
    <property type="project" value="UniProtKB-KW"/>
</dbReference>
<dbReference type="GO" id="GO:0009423">
    <property type="term" value="P:chorismate biosynthetic process"/>
    <property type="evidence" value="ECO:0007669"/>
    <property type="project" value="UniProtKB-UniRule"/>
</dbReference>
<dbReference type="CDD" id="cd07304">
    <property type="entry name" value="Chorismate_synthase"/>
    <property type="match status" value="1"/>
</dbReference>
<dbReference type="Gene3D" id="3.60.150.10">
    <property type="entry name" value="Chorismate synthase AroC"/>
    <property type="match status" value="1"/>
</dbReference>
<dbReference type="HAMAP" id="MF_00300">
    <property type="entry name" value="Chorismate_synth"/>
    <property type="match status" value="1"/>
</dbReference>
<dbReference type="InterPro" id="IPR000453">
    <property type="entry name" value="Chorismate_synth"/>
</dbReference>
<dbReference type="InterPro" id="IPR035904">
    <property type="entry name" value="Chorismate_synth_AroC_sf"/>
</dbReference>
<dbReference type="InterPro" id="IPR020541">
    <property type="entry name" value="Chorismate_synthase_CS"/>
</dbReference>
<dbReference type="NCBIfam" id="TIGR00033">
    <property type="entry name" value="aroC"/>
    <property type="match status" value="1"/>
</dbReference>
<dbReference type="NCBIfam" id="NF003793">
    <property type="entry name" value="PRK05382.1"/>
    <property type="match status" value="1"/>
</dbReference>
<dbReference type="PANTHER" id="PTHR21085">
    <property type="entry name" value="CHORISMATE SYNTHASE"/>
    <property type="match status" value="1"/>
</dbReference>
<dbReference type="PANTHER" id="PTHR21085:SF0">
    <property type="entry name" value="CHORISMATE SYNTHASE"/>
    <property type="match status" value="1"/>
</dbReference>
<dbReference type="Pfam" id="PF01264">
    <property type="entry name" value="Chorismate_synt"/>
    <property type="match status" value="1"/>
</dbReference>
<dbReference type="PIRSF" id="PIRSF001456">
    <property type="entry name" value="Chorismate_synth"/>
    <property type="match status" value="1"/>
</dbReference>
<dbReference type="SUPFAM" id="SSF103263">
    <property type="entry name" value="Chorismate synthase, AroC"/>
    <property type="match status" value="1"/>
</dbReference>
<dbReference type="PROSITE" id="PS00787">
    <property type="entry name" value="CHORISMATE_SYNTHASE_1"/>
    <property type="match status" value="1"/>
</dbReference>
<dbReference type="PROSITE" id="PS00788">
    <property type="entry name" value="CHORISMATE_SYNTHASE_2"/>
    <property type="match status" value="1"/>
</dbReference>
<dbReference type="PROSITE" id="PS00789">
    <property type="entry name" value="CHORISMATE_SYNTHASE_3"/>
    <property type="match status" value="1"/>
</dbReference>
<keyword id="KW-0028">Amino-acid biosynthesis</keyword>
<keyword id="KW-0057">Aromatic amino acid biosynthesis</keyword>
<keyword id="KW-0274">FAD</keyword>
<keyword id="KW-0285">Flavoprotein</keyword>
<keyword id="KW-0288">FMN</keyword>
<keyword id="KW-0456">Lyase</keyword>
<keyword id="KW-0521">NADP</keyword>
<gene>
    <name evidence="1" type="primary">aroC</name>
    <name type="ordered locus">FTF0876c</name>
</gene>
<evidence type="ECO:0000255" key="1">
    <source>
        <dbReference type="HAMAP-Rule" id="MF_00300"/>
    </source>
</evidence>
<organism>
    <name type="scientific">Francisella tularensis subsp. tularensis (strain FSC 198)</name>
    <dbReference type="NCBI Taxonomy" id="393115"/>
    <lineage>
        <taxon>Bacteria</taxon>
        <taxon>Pseudomonadati</taxon>
        <taxon>Pseudomonadota</taxon>
        <taxon>Gammaproteobacteria</taxon>
        <taxon>Thiotrichales</taxon>
        <taxon>Francisellaceae</taxon>
        <taxon>Francisella</taxon>
    </lineage>
</organism>
<reference key="1">
    <citation type="journal article" date="2007" name="PLoS ONE">
        <title>Genome sequencing shows that European isolates of Francisella tularensis subspecies tularensis are almost identical to US laboratory strain Schu S4.</title>
        <authorList>
            <person name="Chaudhuri R.R."/>
            <person name="Ren C.-P."/>
            <person name="Desmond L."/>
            <person name="Vincent G.A."/>
            <person name="Silman N.J."/>
            <person name="Brehm J.K."/>
            <person name="Elmore M.J."/>
            <person name="Hudson M.J."/>
            <person name="Forsman M."/>
            <person name="Isherwood K.E."/>
            <person name="Gurycova D."/>
            <person name="Minton N.P."/>
            <person name="Titball R.W."/>
            <person name="Pallen M.J."/>
            <person name="Vipond R."/>
        </authorList>
    </citation>
    <scope>NUCLEOTIDE SEQUENCE [LARGE SCALE GENOMIC DNA]</scope>
    <source>
        <strain>FSC 198</strain>
    </source>
</reference>
<comment type="function">
    <text evidence="1">Catalyzes the anti-1,4-elimination of the C-3 phosphate and the C-6 proR hydrogen from 5-enolpyruvylshikimate-3-phosphate (EPSP) to yield chorismate, which is the branch point compound that serves as the starting substrate for the three terminal pathways of aromatic amino acid biosynthesis. This reaction introduces a second double bond into the aromatic ring system.</text>
</comment>
<comment type="catalytic activity">
    <reaction evidence="1">
        <text>5-O-(1-carboxyvinyl)-3-phosphoshikimate = chorismate + phosphate</text>
        <dbReference type="Rhea" id="RHEA:21020"/>
        <dbReference type="ChEBI" id="CHEBI:29748"/>
        <dbReference type="ChEBI" id="CHEBI:43474"/>
        <dbReference type="ChEBI" id="CHEBI:57701"/>
        <dbReference type="EC" id="4.2.3.5"/>
    </reaction>
</comment>
<comment type="cofactor">
    <cofactor evidence="1">
        <name>FMNH2</name>
        <dbReference type="ChEBI" id="CHEBI:57618"/>
    </cofactor>
    <text evidence="1">Reduced FMN (FMNH(2)).</text>
</comment>
<comment type="pathway">
    <text evidence="1">Metabolic intermediate biosynthesis; chorismate biosynthesis; chorismate from D-erythrose 4-phosphate and phosphoenolpyruvate: step 7/7.</text>
</comment>
<comment type="subunit">
    <text evidence="1">Homotetramer.</text>
</comment>
<comment type="similarity">
    <text evidence="1">Belongs to the chorismate synthase family.</text>
</comment>
<feature type="chain" id="PRO_1000022488" description="Chorismate synthase">
    <location>
        <begin position="1"/>
        <end position="352"/>
    </location>
</feature>
<feature type="binding site" evidence="1">
    <location>
        <position position="48"/>
    </location>
    <ligand>
        <name>NADP(+)</name>
        <dbReference type="ChEBI" id="CHEBI:58349"/>
    </ligand>
</feature>
<feature type="binding site" evidence="1">
    <location>
        <begin position="125"/>
        <end position="127"/>
    </location>
    <ligand>
        <name>FMN</name>
        <dbReference type="ChEBI" id="CHEBI:58210"/>
    </ligand>
</feature>
<feature type="binding site" evidence="1">
    <location>
        <begin position="237"/>
        <end position="238"/>
    </location>
    <ligand>
        <name>FMN</name>
        <dbReference type="ChEBI" id="CHEBI:58210"/>
    </ligand>
</feature>
<feature type="binding site" evidence="1">
    <location>
        <position position="278"/>
    </location>
    <ligand>
        <name>FMN</name>
        <dbReference type="ChEBI" id="CHEBI:58210"/>
    </ligand>
</feature>
<feature type="binding site" evidence="1">
    <location>
        <begin position="293"/>
        <end position="297"/>
    </location>
    <ligand>
        <name>FMN</name>
        <dbReference type="ChEBI" id="CHEBI:58210"/>
    </ligand>
</feature>
<feature type="binding site" evidence="1">
    <location>
        <position position="319"/>
    </location>
    <ligand>
        <name>FMN</name>
        <dbReference type="ChEBI" id="CHEBI:58210"/>
    </ligand>
</feature>
<protein>
    <recommendedName>
        <fullName evidence="1">Chorismate synthase</fullName>
        <shortName evidence="1">CS</shortName>
        <ecNumber evidence="1">4.2.3.5</ecNumber>
    </recommendedName>
    <alternativeName>
        <fullName evidence="1">5-enolpyruvylshikimate-3-phosphate phospholyase</fullName>
    </alternativeName>
</protein>
<name>AROC_FRAT1</name>